<keyword id="KW-0378">Hydrolase</keyword>
<keyword id="KW-0479">Metal-binding</keyword>
<keyword id="KW-0482">Metalloprotease</keyword>
<keyword id="KW-0645">Protease</keyword>
<keyword id="KW-0862">Zinc</keyword>
<protein>
    <recommendedName>
        <fullName>UPF0758 protein MGAS2096_Spy0915</fullName>
    </recommendedName>
</protein>
<sequence>MYSIKCDDNKAMPRERLMRLGAESLSNQELLAILLRTGNKEKHVLELSSYLLSHLDSLADFKKMSLQELQHLAGIGKVKAIEIKAMIELVSRILATDKTLTDSVLTSVQVAEKMMAALGDKKQEHLVVLYLDNQNRIIEEKTIFIGTVRRSLAEPREILYYACKNMATSLIVIHNHPSGNIEPSSNDYCFTEKIKRSCEDLGIICLDHIIVSYKDYYSFREKSTLF</sequence>
<comment type="similarity">
    <text evidence="2">Belongs to the UPF0758 family.</text>
</comment>
<feature type="chain" id="PRO_1000089858" description="UPF0758 protein MGAS2096_Spy0915">
    <location>
        <begin position="1"/>
        <end position="226"/>
    </location>
</feature>
<feature type="domain" description="MPN" evidence="1">
    <location>
        <begin position="103"/>
        <end position="225"/>
    </location>
</feature>
<feature type="short sequence motif" description="JAMM motif" evidence="1">
    <location>
        <begin position="174"/>
        <end position="187"/>
    </location>
</feature>
<feature type="binding site" evidence="1">
    <location>
        <position position="174"/>
    </location>
    <ligand>
        <name>Zn(2+)</name>
        <dbReference type="ChEBI" id="CHEBI:29105"/>
        <note>catalytic</note>
    </ligand>
</feature>
<feature type="binding site" evidence="1">
    <location>
        <position position="176"/>
    </location>
    <ligand>
        <name>Zn(2+)</name>
        <dbReference type="ChEBI" id="CHEBI:29105"/>
        <note>catalytic</note>
    </ligand>
</feature>
<feature type="binding site" evidence="1">
    <location>
        <position position="187"/>
    </location>
    <ligand>
        <name>Zn(2+)</name>
        <dbReference type="ChEBI" id="CHEBI:29105"/>
        <note>catalytic</note>
    </ligand>
</feature>
<accession>Q1JBU1</accession>
<reference key="1">
    <citation type="journal article" date="2006" name="Proc. Natl. Acad. Sci. U.S.A.">
        <title>Molecular genetic anatomy of inter- and intraserotype variation in the human bacterial pathogen group A Streptococcus.</title>
        <authorList>
            <person name="Beres S.B."/>
            <person name="Richter E.W."/>
            <person name="Nagiec M.J."/>
            <person name="Sumby P."/>
            <person name="Porcella S.F."/>
            <person name="DeLeo F.R."/>
            <person name="Musser J.M."/>
        </authorList>
    </citation>
    <scope>NUCLEOTIDE SEQUENCE [LARGE SCALE GENOMIC DNA]</scope>
    <source>
        <strain>MGAS2096</strain>
    </source>
</reference>
<name>Y915_STRPB</name>
<proteinExistence type="inferred from homology"/>
<evidence type="ECO:0000255" key="1">
    <source>
        <dbReference type="PROSITE-ProRule" id="PRU01182"/>
    </source>
</evidence>
<evidence type="ECO:0000305" key="2"/>
<gene>
    <name type="ordered locus">MGAS2096_Spy0915</name>
</gene>
<organism>
    <name type="scientific">Streptococcus pyogenes serotype M12 (strain MGAS2096)</name>
    <dbReference type="NCBI Taxonomy" id="370553"/>
    <lineage>
        <taxon>Bacteria</taxon>
        <taxon>Bacillati</taxon>
        <taxon>Bacillota</taxon>
        <taxon>Bacilli</taxon>
        <taxon>Lactobacillales</taxon>
        <taxon>Streptococcaceae</taxon>
        <taxon>Streptococcus</taxon>
    </lineage>
</organism>
<dbReference type="EMBL" id="CP000261">
    <property type="protein sequence ID" value="ABF35967.1"/>
    <property type="molecule type" value="Genomic_DNA"/>
</dbReference>
<dbReference type="SMR" id="Q1JBU1"/>
<dbReference type="KEGG" id="spj:MGAS2096_Spy0915"/>
<dbReference type="HOGENOM" id="CLU_073529_0_2_9"/>
<dbReference type="GO" id="GO:0046872">
    <property type="term" value="F:metal ion binding"/>
    <property type="evidence" value="ECO:0007669"/>
    <property type="project" value="UniProtKB-KW"/>
</dbReference>
<dbReference type="GO" id="GO:0008237">
    <property type="term" value="F:metallopeptidase activity"/>
    <property type="evidence" value="ECO:0007669"/>
    <property type="project" value="UniProtKB-KW"/>
</dbReference>
<dbReference type="GO" id="GO:0006508">
    <property type="term" value="P:proteolysis"/>
    <property type="evidence" value="ECO:0007669"/>
    <property type="project" value="UniProtKB-KW"/>
</dbReference>
<dbReference type="CDD" id="cd08071">
    <property type="entry name" value="MPN_DUF2466"/>
    <property type="match status" value="1"/>
</dbReference>
<dbReference type="Gene3D" id="3.40.140.10">
    <property type="entry name" value="Cytidine Deaminase, domain 2"/>
    <property type="match status" value="1"/>
</dbReference>
<dbReference type="InterPro" id="IPR037518">
    <property type="entry name" value="MPN"/>
</dbReference>
<dbReference type="InterPro" id="IPR025657">
    <property type="entry name" value="RadC_JAB"/>
</dbReference>
<dbReference type="InterPro" id="IPR010994">
    <property type="entry name" value="RuvA_2-like"/>
</dbReference>
<dbReference type="InterPro" id="IPR001405">
    <property type="entry name" value="UPF0758"/>
</dbReference>
<dbReference type="InterPro" id="IPR020891">
    <property type="entry name" value="UPF0758_CS"/>
</dbReference>
<dbReference type="InterPro" id="IPR046778">
    <property type="entry name" value="UPF0758_N"/>
</dbReference>
<dbReference type="NCBIfam" id="NF000642">
    <property type="entry name" value="PRK00024.1"/>
    <property type="match status" value="1"/>
</dbReference>
<dbReference type="NCBIfam" id="TIGR00608">
    <property type="entry name" value="radc"/>
    <property type="match status" value="1"/>
</dbReference>
<dbReference type="PANTHER" id="PTHR30471">
    <property type="entry name" value="DNA REPAIR PROTEIN RADC"/>
    <property type="match status" value="1"/>
</dbReference>
<dbReference type="PANTHER" id="PTHR30471:SF3">
    <property type="entry name" value="UPF0758 PROTEIN YEES-RELATED"/>
    <property type="match status" value="1"/>
</dbReference>
<dbReference type="Pfam" id="PF04002">
    <property type="entry name" value="RadC"/>
    <property type="match status" value="1"/>
</dbReference>
<dbReference type="Pfam" id="PF20582">
    <property type="entry name" value="UPF0758_N"/>
    <property type="match status" value="1"/>
</dbReference>
<dbReference type="SUPFAM" id="SSF47781">
    <property type="entry name" value="RuvA domain 2-like"/>
    <property type="match status" value="1"/>
</dbReference>
<dbReference type="PROSITE" id="PS50249">
    <property type="entry name" value="MPN"/>
    <property type="match status" value="1"/>
</dbReference>
<dbReference type="PROSITE" id="PS01302">
    <property type="entry name" value="UPF0758"/>
    <property type="match status" value="1"/>
</dbReference>